<name>CYB_PERSU</name>
<sequence>MTNIRKSHPLMKIINNSFIDLPAPSNISSWWNFGSLLGMCLALQILTGLFLAMHYTSDTATAFNSVTHICRDVNYGWILRYLHANGASMFFICLYLHVGRGLYYGSYLYKETWNVGVILLFAVMATAFMGYVLPWGQMSFWGATVITNLLSAIPYIGNTLVEWIWGGFSVDKATLTRFFAFHFLLPFIVSAMVMVHLLFLHETGSNNPMGIPSNVDMIPFHPYYSIKDILGLFIMILALLTLVLFFPDMLGDPDNYTPANPLSTPPHIKPEWYFLFAYAILRSIPNKLGGVLALVFSILILIIIPLLHTSKQRSMSFRPISQCLFWLLTADLLTLTWIGGQPVEHPYVIIGQLASILYFLIIIILMPLASLAENHLMKW</sequence>
<geneLocation type="mitochondrion"/>
<comment type="function">
    <text evidence="2">Component of the ubiquinol-cytochrome c reductase complex (complex III or cytochrome b-c1 complex) that is part of the mitochondrial respiratory chain. The b-c1 complex mediates electron transfer from ubiquinol to cytochrome c. Contributes to the generation of a proton gradient across the mitochondrial membrane that is then used for ATP synthesis.</text>
</comment>
<comment type="cofactor">
    <cofactor evidence="2">
        <name>heme b</name>
        <dbReference type="ChEBI" id="CHEBI:60344"/>
    </cofactor>
    <text evidence="2">Binds 2 heme b groups non-covalently.</text>
</comment>
<comment type="subunit">
    <text evidence="2">The cytochrome bc1 complex contains 11 subunits: 3 respiratory subunits (MT-CYB, CYC1 and UQCRFS1), 2 core proteins (UQCRC1 and UQCRC2) and 6 low-molecular weight proteins (UQCRH/QCR6, UQCRB/QCR7, UQCRQ/QCR8, UQCR10/QCR9, UQCR11/QCR10 and a cleavage product of UQCRFS1). This cytochrome bc1 complex then forms a dimer.</text>
</comment>
<comment type="subcellular location">
    <subcellularLocation>
        <location evidence="2">Mitochondrion inner membrane</location>
        <topology evidence="2">Multi-pass membrane protein</topology>
    </subcellularLocation>
</comment>
<comment type="miscellaneous">
    <text evidence="1">Heme 1 (or BL or b562) is low-potential and absorbs at about 562 nm, and heme 2 (or BH or b566) is high-potential and absorbs at about 566 nm.</text>
</comment>
<comment type="similarity">
    <text evidence="3 4">Belongs to the cytochrome b family.</text>
</comment>
<comment type="caution">
    <text evidence="2">The full-length protein contains only eight transmembrane helices, not nine as predicted by bioinformatics tools.</text>
</comment>
<feature type="chain" id="PRO_0000061403" description="Cytochrome b">
    <location>
        <begin position="1"/>
        <end position="379"/>
    </location>
</feature>
<feature type="transmembrane region" description="Helical" evidence="2">
    <location>
        <begin position="33"/>
        <end position="53"/>
    </location>
</feature>
<feature type="transmembrane region" description="Helical" evidence="2">
    <location>
        <begin position="77"/>
        <end position="98"/>
    </location>
</feature>
<feature type="transmembrane region" description="Helical" evidence="2">
    <location>
        <begin position="113"/>
        <end position="133"/>
    </location>
</feature>
<feature type="transmembrane region" description="Helical" evidence="2">
    <location>
        <begin position="178"/>
        <end position="198"/>
    </location>
</feature>
<feature type="transmembrane region" description="Helical" evidence="2">
    <location>
        <begin position="226"/>
        <end position="246"/>
    </location>
</feature>
<feature type="transmembrane region" description="Helical" evidence="2">
    <location>
        <begin position="288"/>
        <end position="308"/>
    </location>
</feature>
<feature type="transmembrane region" description="Helical" evidence="2">
    <location>
        <begin position="320"/>
        <end position="340"/>
    </location>
</feature>
<feature type="transmembrane region" description="Helical" evidence="2">
    <location>
        <begin position="347"/>
        <end position="367"/>
    </location>
</feature>
<feature type="binding site" description="axial binding residue" evidence="2">
    <location>
        <position position="83"/>
    </location>
    <ligand>
        <name>heme b</name>
        <dbReference type="ChEBI" id="CHEBI:60344"/>
        <label>b562</label>
    </ligand>
    <ligandPart>
        <name>Fe</name>
        <dbReference type="ChEBI" id="CHEBI:18248"/>
    </ligandPart>
</feature>
<feature type="binding site" description="axial binding residue" evidence="2">
    <location>
        <position position="97"/>
    </location>
    <ligand>
        <name>heme b</name>
        <dbReference type="ChEBI" id="CHEBI:60344"/>
        <label>b566</label>
    </ligand>
    <ligandPart>
        <name>Fe</name>
        <dbReference type="ChEBI" id="CHEBI:18248"/>
    </ligandPart>
</feature>
<feature type="binding site" description="axial binding residue" evidence="2">
    <location>
        <position position="182"/>
    </location>
    <ligand>
        <name>heme b</name>
        <dbReference type="ChEBI" id="CHEBI:60344"/>
        <label>b562</label>
    </ligand>
    <ligandPart>
        <name>Fe</name>
        <dbReference type="ChEBI" id="CHEBI:18248"/>
    </ligandPart>
</feature>
<feature type="binding site" description="axial binding residue" evidence="2">
    <location>
        <position position="196"/>
    </location>
    <ligand>
        <name>heme b</name>
        <dbReference type="ChEBI" id="CHEBI:60344"/>
        <label>b566</label>
    </ligand>
    <ligandPart>
        <name>Fe</name>
        <dbReference type="ChEBI" id="CHEBI:18248"/>
    </ligandPart>
</feature>
<feature type="binding site" evidence="2">
    <location>
        <position position="201"/>
    </location>
    <ligand>
        <name>a ubiquinone</name>
        <dbReference type="ChEBI" id="CHEBI:16389"/>
    </ligand>
</feature>
<feature type="sequence conflict" description="In Ref. 2; AAA17777." evidence="5" ref="2">
    <original>N</original>
    <variation>D</variation>
    <location>
        <position position="16"/>
    </location>
</feature>
<feature type="sequence conflict" description="In Ref. 2; AAA17777." evidence="5" ref="2">
    <original>I</original>
    <variation>T</variation>
    <location>
        <position position="78"/>
    </location>
</feature>
<protein>
    <recommendedName>
        <fullName>Cytochrome b</fullName>
    </recommendedName>
    <alternativeName>
        <fullName>Complex III subunit 3</fullName>
    </alternativeName>
    <alternativeName>
        <fullName>Complex III subunit III</fullName>
    </alternativeName>
    <alternativeName>
        <fullName>Cytochrome b-c1 complex subunit 3</fullName>
    </alternativeName>
    <alternativeName>
        <fullName>Ubiquinol-cytochrome-c reductase complex cytochrome b subunit</fullName>
    </alternativeName>
</protein>
<gene>
    <name type="primary">MT-CYB</name>
    <name type="synonym">COB</name>
    <name type="synonym">CYTB</name>
    <name type="synonym">MTCYB</name>
</gene>
<accession>Q36654</accession>
<accession>Q7YD74</accession>
<organism>
    <name type="scientific">Perimyotis subflavus</name>
    <name type="common">Tricolored bat</name>
    <name type="synonym">Pipistrellus subflavus</name>
    <dbReference type="NCBI Taxonomy" id="27672"/>
    <lineage>
        <taxon>Eukaryota</taxon>
        <taxon>Metazoa</taxon>
        <taxon>Chordata</taxon>
        <taxon>Craniata</taxon>
        <taxon>Vertebrata</taxon>
        <taxon>Euteleostomi</taxon>
        <taxon>Mammalia</taxon>
        <taxon>Eutheria</taxon>
        <taxon>Laurasiatheria</taxon>
        <taxon>Chiroptera</taxon>
        <taxon>Yangochiroptera</taxon>
        <taxon>Vespertilionidae</taxon>
        <taxon>Perimyotis</taxon>
    </lineage>
</organism>
<keyword id="KW-0249">Electron transport</keyword>
<keyword id="KW-0349">Heme</keyword>
<keyword id="KW-0408">Iron</keyword>
<keyword id="KW-0472">Membrane</keyword>
<keyword id="KW-0479">Metal-binding</keyword>
<keyword id="KW-0496">Mitochondrion</keyword>
<keyword id="KW-0999">Mitochondrion inner membrane</keyword>
<keyword id="KW-0679">Respiratory chain</keyword>
<keyword id="KW-0812">Transmembrane</keyword>
<keyword id="KW-1133">Transmembrane helix</keyword>
<keyword id="KW-0813">Transport</keyword>
<keyword id="KW-0830">Ubiquinone</keyword>
<evidence type="ECO:0000250" key="1"/>
<evidence type="ECO:0000250" key="2">
    <source>
        <dbReference type="UniProtKB" id="P00157"/>
    </source>
</evidence>
<evidence type="ECO:0000255" key="3">
    <source>
        <dbReference type="PROSITE-ProRule" id="PRU00967"/>
    </source>
</evidence>
<evidence type="ECO:0000255" key="4">
    <source>
        <dbReference type="PROSITE-ProRule" id="PRU00968"/>
    </source>
</evidence>
<evidence type="ECO:0000305" key="5"/>
<proteinExistence type="inferred from homology"/>
<dbReference type="EMBL" id="AJ504449">
    <property type="protein sequence ID" value="CAD43207.1"/>
    <property type="molecule type" value="Genomic_DNA"/>
</dbReference>
<dbReference type="EMBL" id="L19730">
    <property type="protein sequence ID" value="AAA17777.1"/>
    <property type="molecule type" value="Genomic_DNA"/>
</dbReference>
<dbReference type="SMR" id="Q36654"/>
<dbReference type="GO" id="GO:0005743">
    <property type="term" value="C:mitochondrial inner membrane"/>
    <property type="evidence" value="ECO:0007669"/>
    <property type="project" value="UniProtKB-SubCell"/>
</dbReference>
<dbReference type="GO" id="GO:0045275">
    <property type="term" value="C:respiratory chain complex III"/>
    <property type="evidence" value="ECO:0007669"/>
    <property type="project" value="InterPro"/>
</dbReference>
<dbReference type="GO" id="GO:0046872">
    <property type="term" value="F:metal ion binding"/>
    <property type="evidence" value="ECO:0007669"/>
    <property type="project" value="UniProtKB-KW"/>
</dbReference>
<dbReference type="GO" id="GO:0008121">
    <property type="term" value="F:ubiquinol-cytochrome-c reductase activity"/>
    <property type="evidence" value="ECO:0007669"/>
    <property type="project" value="InterPro"/>
</dbReference>
<dbReference type="GO" id="GO:0006122">
    <property type="term" value="P:mitochondrial electron transport, ubiquinol to cytochrome c"/>
    <property type="evidence" value="ECO:0007669"/>
    <property type="project" value="TreeGrafter"/>
</dbReference>
<dbReference type="CDD" id="cd00290">
    <property type="entry name" value="cytochrome_b_C"/>
    <property type="match status" value="1"/>
</dbReference>
<dbReference type="CDD" id="cd00284">
    <property type="entry name" value="Cytochrome_b_N"/>
    <property type="match status" value="1"/>
</dbReference>
<dbReference type="FunFam" id="1.20.810.10:FF:000002">
    <property type="entry name" value="Cytochrome b"/>
    <property type="match status" value="1"/>
</dbReference>
<dbReference type="Gene3D" id="1.20.810.10">
    <property type="entry name" value="Cytochrome Bc1 Complex, Chain C"/>
    <property type="match status" value="1"/>
</dbReference>
<dbReference type="InterPro" id="IPR005798">
    <property type="entry name" value="Cyt_b/b6_C"/>
</dbReference>
<dbReference type="InterPro" id="IPR036150">
    <property type="entry name" value="Cyt_b/b6_C_sf"/>
</dbReference>
<dbReference type="InterPro" id="IPR005797">
    <property type="entry name" value="Cyt_b/b6_N"/>
</dbReference>
<dbReference type="InterPro" id="IPR027387">
    <property type="entry name" value="Cytb/b6-like_sf"/>
</dbReference>
<dbReference type="InterPro" id="IPR030689">
    <property type="entry name" value="Cytochrome_b"/>
</dbReference>
<dbReference type="InterPro" id="IPR048260">
    <property type="entry name" value="Cytochrome_b_C_euk/bac"/>
</dbReference>
<dbReference type="InterPro" id="IPR048259">
    <property type="entry name" value="Cytochrome_b_N_euk/bac"/>
</dbReference>
<dbReference type="InterPro" id="IPR016174">
    <property type="entry name" value="Di-haem_cyt_TM"/>
</dbReference>
<dbReference type="PANTHER" id="PTHR19271">
    <property type="entry name" value="CYTOCHROME B"/>
    <property type="match status" value="1"/>
</dbReference>
<dbReference type="PANTHER" id="PTHR19271:SF16">
    <property type="entry name" value="CYTOCHROME B"/>
    <property type="match status" value="1"/>
</dbReference>
<dbReference type="Pfam" id="PF00032">
    <property type="entry name" value="Cytochrom_B_C"/>
    <property type="match status" value="1"/>
</dbReference>
<dbReference type="Pfam" id="PF00033">
    <property type="entry name" value="Cytochrome_B"/>
    <property type="match status" value="1"/>
</dbReference>
<dbReference type="PIRSF" id="PIRSF038885">
    <property type="entry name" value="COB"/>
    <property type="match status" value="1"/>
</dbReference>
<dbReference type="SUPFAM" id="SSF81648">
    <property type="entry name" value="a domain/subunit of cytochrome bc1 complex (Ubiquinol-cytochrome c reductase)"/>
    <property type="match status" value="1"/>
</dbReference>
<dbReference type="SUPFAM" id="SSF81342">
    <property type="entry name" value="Transmembrane di-heme cytochromes"/>
    <property type="match status" value="1"/>
</dbReference>
<dbReference type="PROSITE" id="PS51003">
    <property type="entry name" value="CYTB_CTER"/>
    <property type="match status" value="1"/>
</dbReference>
<dbReference type="PROSITE" id="PS51002">
    <property type="entry name" value="CYTB_NTER"/>
    <property type="match status" value="1"/>
</dbReference>
<reference key="1">
    <citation type="journal article" date="2004" name="J. Mammal.">
        <title>Molecular systematics of the fishing bat Myotis (Pizonyx) vivesi.</title>
        <authorList>
            <person name="Stadelmann B.Y."/>
            <person name="Herrera L.G."/>
            <person name="Arroyo-Cabrales J."/>
            <person name="Flores-Martinez J.J."/>
            <person name="May B.P."/>
            <person name="Ruedi M."/>
        </authorList>
    </citation>
    <scope>NUCLEOTIDE SEQUENCE [GENOMIC DNA]</scope>
</reference>
<reference key="2">
    <citation type="journal article" date="1994" name="J. Mammal.">
        <title>Familial affinity of Tomopeas ravus (Chiroptera) based on protein electrophoretic and cytochrome b sequence data.</title>
        <authorList>
            <person name="Sudman P.D."/>
            <person name="Barkley L.J."/>
            <person name="Hafner M.S."/>
        </authorList>
    </citation>
    <scope>NUCLEOTIDE SEQUENCE [GENOMIC DNA]</scope>
    <source>
        <strain>Isolate LSUMZ 23795</strain>
        <tissue>Kidney</tissue>
        <tissue>Liver</tissue>
    </source>
</reference>